<comment type="function">
    <text evidence="1">Controls the rotational direction of flagella during chemotaxis.</text>
</comment>
<comment type="subcellular location">
    <subcellularLocation>
        <location evidence="3">Cell inner membrane</location>
        <topology evidence="3">Single-pass membrane protein</topology>
    </subcellularLocation>
</comment>
<comment type="similarity">
    <text evidence="3">Belongs to the FliL family.</text>
</comment>
<proteinExistence type="inferred from homology"/>
<evidence type="ECO:0000250" key="1"/>
<evidence type="ECO:0000255" key="2"/>
<evidence type="ECO:0000305" key="3"/>
<name>FLIL_ECO57</name>
<dbReference type="EMBL" id="AE005174">
    <property type="protein sequence ID" value="AAG56959.1"/>
    <property type="molecule type" value="Genomic_DNA"/>
</dbReference>
<dbReference type="EMBL" id="BA000007">
    <property type="protein sequence ID" value="BAB36106.1"/>
    <property type="molecule type" value="Genomic_DNA"/>
</dbReference>
<dbReference type="PIR" id="C85812">
    <property type="entry name" value="C85812"/>
</dbReference>
<dbReference type="PIR" id="C90964">
    <property type="entry name" value="C90964"/>
</dbReference>
<dbReference type="RefSeq" id="NP_310710.1">
    <property type="nucleotide sequence ID" value="NC_002695.1"/>
</dbReference>
<dbReference type="RefSeq" id="WP_000133106.1">
    <property type="nucleotide sequence ID" value="NZ_VOAI01000028.1"/>
</dbReference>
<dbReference type="SMR" id="P0ABY0"/>
<dbReference type="STRING" id="155864.Z3034"/>
<dbReference type="GeneID" id="75172063"/>
<dbReference type="GeneID" id="913120"/>
<dbReference type="KEGG" id="ece:Z3034"/>
<dbReference type="KEGG" id="ecs:ECs_2683"/>
<dbReference type="PATRIC" id="fig|386585.9.peg.2810"/>
<dbReference type="eggNOG" id="COG1580">
    <property type="taxonomic scope" value="Bacteria"/>
</dbReference>
<dbReference type="HOGENOM" id="CLU_099018_0_1_6"/>
<dbReference type="OMA" id="YWRMQQH"/>
<dbReference type="Proteomes" id="UP000000558">
    <property type="component" value="Chromosome"/>
</dbReference>
<dbReference type="Proteomes" id="UP000002519">
    <property type="component" value="Chromosome"/>
</dbReference>
<dbReference type="GO" id="GO:0009425">
    <property type="term" value="C:bacterial-type flagellum basal body"/>
    <property type="evidence" value="ECO:0007669"/>
    <property type="project" value="InterPro"/>
</dbReference>
<dbReference type="GO" id="GO:0005886">
    <property type="term" value="C:plasma membrane"/>
    <property type="evidence" value="ECO:0007669"/>
    <property type="project" value="UniProtKB-SubCell"/>
</dbReference>
<dbReference type="GO" id="GO:0071978">
    <property type="term" value="P:bacterial-type flagellum-dependent swarming motility"/>
    <property type="evidence" value="ECO:0007669"/>
    <property type="project" value="TreeGrafter"/>
</dbReference>
<dbReference type="GO" id="GO:0006935">
    <property type="term" value="P:chemotaxis"/>
    <property type="evidence" value="ECO:0007669"/>
    <property type="project" value="UniProtKB-KW"/>
</dbReference>
<dbReference type="InterPro" id="IPR005503">
    <property type="entry name" value="FliL"/>
</dbReference>
<dbReference type="NCBIfam" id="NF005435">
    <property type="entry name" value="PRK07021.1"/>
    <property type="match status" value="1"/>
</dbReference>
<dbReference type="PANTHER" id="PTHR35091">
    <property type="entry name" value="FLAGELLAR PROTEIN FLIL"/>
    <property type="match status" value="1"/>
</dbReference>
<dbReference type="PANTHER" id="PTHR35091:SF2">
    <property type="entry name" value="FLAGELLAR PROTEIN FLIL"/>
    <property type="match status" value="1"/>
</dbReference>
<dbReference type="Pfam" id="PF03748">
    <property type="entry name" value="FliL"/>
    <property type="match status" value="1"/>
</dbReference>
<sequence>MTDYAISKKSKRSLWIPILVFITLAACASAGYSYWHSHQVAADDKAQQRVVPSPVFYALDTFTVNLGDADRVLYIGITLRLKDEATRSRLSEYLPEVRSRLLLLFSRQDAAVLATEEGKKNLIAEIKTTLSTPLVAGQPKQDVTDVLYTAFILR</sequence>
<feature type="chain" id="PRO_0000180915" description="Flagellar protein FliL">
    <location>
        <begin position="1"/>
        <end position="154"/>
    </location>
</feature>
<feature type="transmembrane region" description="Helical" evidence="2">
    <location>
        <begin position="13"/>
        <end position="35"/>
    </location>
</feature>
<organism>
    <name type="scientific">Escherichia coli O157:H7</name>
    <dbReference type="NCBI Taxonomy" id="83334"/>
    <lineage>
        <taxon>Bacteria</taxon>
        <taxon>Pseudomonadati</taxon>
        <taxon>Pseudomonadota</taxon>
        <taxon>Gammaproteobacteria</taxon>
        <taxon>Enterobacterales</taxon>
        <taxon>Enterobacteriaceae</taxon>
        <taxon>Escherichia</taxon>
    </lineage>
</organism>
<keyword id="KW-0997">Cell inner membrane</keyword>
<keyword id="KW-1003">Cell membrane</keyword>
<keyword id="KW-0145">Chemotaxis</keyword>
<keyword id="KW-0283">Flagellar rotation</keyword>
<keyword id="KW-0472">Membrane</keyword>
<keyword id="KW-1185">Reference proteome</keyword>
<keyword id="KW-0812">Transmembrane</keyword>
<keyword id="KW-1133">Transmembrane helix</keyword>
<gene>
    <name type="primary">fliL</name>
    <name type="ordered locus">Z3034</name>
    <name type="ordered locus">ECs2683</name>
</gene>
<reference key="1">
    <citation type="journal article" date="2001" name="Nature">
        <title>Genome sequence of enterohaemorrhagic Escherichia coli O157:H7.</title>
        <authorList>
            <person name="Perna N.T."/>
            <person name="Plunkett G. III"/>
            <person name="Burland V."/>
            <person name="Mau B."/>
            <person name="Glasner J.D."/>
            <person name="Rose D.J."/>
            <person name="Mayhew G.F."/>
            <person name="Evans P.S."/>
            <person name="Gregor J."/>
            <person name="Kirkpatrick H.A."/>
            <person name="Posfai G."/>
            <person name="Hackett J."/>
            <person name="Klink S."/>
            <person name="Boutin A."/>
            <person name="Shao Y."/>
            <person name="Miller L."/>
            <person name="Grotbeck E.J."/>
            <person name="Davis N.W."/>
            <person name="Lim A."/>
            <person name="Dimalanta E.T."/>
            <person name="Potamousis K."/>
            <person name="Apodaca J."/>
            <person name="Anantharaman T.S."/>
            <person name="Lin J."/>
            <person name="Yen G."/>
            <person name="Schwartz D.C."/>
            <person name="Welch R.A."/>
            <person name="Blattner F.R."/>
        </authorList>
    </citation>
    <scope>NUCLEOTIDE SEQUENCE [LARGE SCALE GENOMIC DNA]</scope>
    <source>
        <strain>O157:H7 / EDL933 / ATCC 700927 / EHEC</strain>
    </source>
</reference>
<reference key="2">
    <citation type="journal article" date="2001" name="DNA Res.">
        <title>Complete genome sequence of enterohemorrhagic Escherichia coli O157:H7 and genomic comparison with a laboratory strain K-12.</title>
        <authorList>
            <person name="Hayashi T."/>
            <person name="Makino K."/>
            <person name="Ohnishi M."/>
            <person name="Kurokawa K."/>
            <person name="Ishii K."/>
            <person name="Yokoyama K."/>
            <person name="Han C.-G."/>
            <person name="Ohtsubo E."/>
            <person name="Nakayama K."/>
            <person name="Murata T."/>
            <person name="Tanaka M."/>
            <person name="Tobe T."/>
            <person name="Iida T."/>
            <person name="Takami H."/>
            <person name="Honda T."/>
            <person name="Sasakawa C."/>
            <person name="Ogasawara N."/>
            <person name="Yasunaga T."/>
            <person name="Kuhara S."/>
            <person name="Shiba T."/>
            <person name="Hattori M."/>
            <person name="Shinagawa H."/>
        </authorList>
    </citation>
    <scope>NUCLEOTIDE SEQUENCE [LARGE SCALE GENOMIC DNA]</scope>
    <source>
        <strain>O157:H7 / Sakai / RIMD 0509952 / EHEC</strain>
    </source>
</reference>
<protein>
    <recommendedName>
        <fullName>Flagellar protein FliL</fullName>
    </recommendedName>
</protein>
<accession>P0ABY0</accession>
<accession>P06973</accession>